<organism>
    <name type="scientific">Methanosarcina acetivorans (strain ATCC 35395 / DSM 2834 / JCM 12185 / C2A)</name>
    <dbReference type="NCBI Taxonomy" id="188937"/>
    <lineage>
        <taxon>Archaea</taxon>
        <taxon>Methanobacteriati</taxon>
        <taxon>Methanobacteriota</taxon>
        <taxon>Stenosarchaea group</taxon>
        <taxon>Methanomicrobia</taxon>
        <taxon>Methanosarcinales</taxon>
        <taxon>Methanosarcinaceae</taxon>
        <taxon>Methanosarcina</taxon>
    </lineage>
</organism>
<proteinExistence type="inferred from homology"/>
<protein>
    <recommendedName>
        <fullName evidence="1">CCA-adding enzyme</fullName>
        <ecNumber evidence="1">2.7.7.72</ecNumber>
    </recommendedName>
    <alternativeName>
        <fullName evidence="1">CCA tRNA nucleotidyltransferase</fullName>
    </alternativeName>
    <alternativeName>
        <fullName evidence="1">tRNA CCA-pyrophosphorylase</fullName>
    </alternativeName>
    <alternativeName>
        <fullName evidence="1">tRNA adenylyl-/cytidylyl- transferase</fullName>
    </alternativeName>
    <alternativeName>
        <fullName evidence="1">tRNA nucleotidyltransferase</fullName>
    </alternativeName>
    <alternativeName>
        <fullName evidence="1">tRNA-NT</fullName>
    </alternativeName>
</protein>
<keyword id="KW-0067">ATP-binding</keyword>
<keyword id="KW-0460">Magnesium</keyword>
<keyword id="KW-0479">Metal-binding</keyword>
<keyword id="KW-0547">Nucleotide-binding</keyword>
<keyword id="KW-0548">Nucleotidyltransferase</keyword>
<keyword id="KW-1185">Reference proteome</keyword>
<keyword id="KW-0692">RNA repair</keyword>
<keyword id="KW-0694">RNA-binding</keyword>
<keyword id="KW-0808">Transferase</keyword>
<keyword id="KW-0819">tRNA processing</keyword>
<accession>Q8TGX2</accession>
<feature type="chain" id="PRO_0000139068" description="CCA-adding enzyme">
    <location>
        <begin position="1"/>
        <end position="454"/>
    </location>
</feature>
<feature type="binding site" evidence="1">
    <location>
        <position position="59"/>
    </location>
    <ligand>
        <name>ATP</name>
        <dbReference type="ChEBI" id="CHEBI:30616"/>
    </ligand>
</feature>
<feature type="binding site" evidence="1">
    <location>
        <position position="59"/>
    </location>
    <ligand>
        <name>CTP</name>
        <dbReference type="ChEBI" id="CHEBI:37563"/>
    </ligand>
</feature>
<feature type="binding site" evidence="1">
    <location>
        <position position="62"/>
    </location>
    <ligand>
        <name>ATP</name>
        <dbReference type="ChEBI" id="CHEBI:30616"/>
    </ligand>
</feature>
<feature type="binding site" evidence="1">
    <location>
        <position position="62"/>
    </location>
    <ligand>
        <name>CTP</name>
        <dbReference type="ChEBI" id="CHEBI:37563"/>
    </ligand>
</feature>
<feature type="binding site" evidence="1">
    <location>
        <position position="71"/>
    </location>
    <ligand>
        <name>Mg(2+)</name>
        <dbReference type="ChEBI" id="CHEBI:18420"/>
    </ligand>
</feature>
<feature type="binding site" evidence="1">
    <location>
        <position position="73"/>
    </location>
    <ligand>
        <name>Mg(2+)</name>
        <dbReference type="ChEBI" id="CHEBI:18420"/>
    </ligand>
</feature>
<feature type="binding site" evidence="1">
    <location>
        <position position="125"/>
    </location>
    <ligand>
        <name>Mg(2+)</name>
        <dbReference type="ChEBI" id="CHEBI:18420"/>
    </ligand>
</feature>
<feature type="binding site" evidence="1">
    <location>
        <position position="148"/>
    </location>
    <ligand>
        <name>ATP</name>
        <dbReference type="ChEBI" id="CHEBI:30616"/>
    </ligand>
</feature>
<feature type="binding site" evidence="1">
    <location>
        <position position="148"/>
    </location>
    <ligand>
        <name>CTP</name>
        <dbReference type="ChEBI" id="CHEBI:37563"/>
    </ligand>
</feature>
<feature type="binding site" evidence="1">
    <location>
        <position position="167"/>
    </location>
    <ligand>
        <name>ATP</name>
        <dbReference type="ChEBI" id="CHEBI:30616"/>
    </ligand>
</feature>
<feature type="binding site" evidence="1">
    <location>
        <position position="167"/>
    </location>
    <ligand>
        <name>CTP</name>
        <dbReference type="ChEBI" id="CHEBI:37563"/>
    </ligand>
</feature>
<feature type="binding site" evidence="1">
    <location>
        <position position="176"/>
    </location>
    <ligand>
        <name>ATP</name>
        <dbReference type="ChEBI" id="CHEBI:30616"/>
    </ligand>
</feature>
<feature type="binding site" evidence="1">
    <location>
        <position position="176"/>
    </location>
    <ligand>
        <name>CTP</name>
        <dbReference type="ChEBI" id="CHEBI:37563"/>
    </ligand>
</feature>
<dbReference type="EC" id="2.7.7.72" evidence="1"/>
<dbReference type="EMBL" id="AE010299">
    <property type="protein sequence ID" value="AAM06920.1"/>
    <property type="molecule type" value="Genomic_DNA"/>
</dbReference>
<dbReference type="RefSeq" id="WP_011023473.1">
    <property type="nucleotide sequence ID" value="NC_003552.1"/>
</dbReference>
<dbReference type="SMR" id="Q8TGX2"/>
<dbReference type="FunCoup" id="Q8TGX2">
    <property type="interactions" value="5"/>
</dbReference>
<dbReference type="STRING" id="188937.MA_3559"/>
<dbReference type="EnsemblBacteria" id="AAM06920">
    <property type="protein sequence ID" value="AAM06920"/>
    <property type="gene ID" value="MA_3559"/>
</dbReference>
<dbReference type="GeneID" id="1475452"/>
<dbReference type="KEGG" id="mac:MA_3559"/>
<dbReference type="HOGENOM" id="CLU_044679_1_0_2"/>
<dbReference type="InParanoid" id="Q8TGX2"/>
<dbReference type="OrthoDB" id="7378at2157"/>
<dbReference type="PhylomeDB" id="Q8TGX2"/>
<dbReference type="Proteomes" id="UP000002487">
    <property type="component" value="Chromosome"/>
</dbReference>
<dbReference type="GO" id="GO:0005524">
    <property type="term" value="F:ATP binding"/>
    <property type="evidence" value="ECO:0007669"/>
    <property type="project" value="UniProtKB-UniRule"/>
</dbReference>
<dbReference type="GO" id="GO:0004810">
    <property type="term" value="F:CCA tRNA nucleotidyltransferase activity"/>
    <property type="evidence" value="ECO:0007669"/>
    <property type="project" value="UniProtKB-UniRule"/>
</dbReference>
<dbReference type="GO" id="GO:0000287">
    <property type="term" value="F:magnesium ion binding"/>
    <property type="evidence" value="ECO:0007669"/>
    <property type="project" value="UniProtKB-UniRule"/>
</dbReference>
<dbReference type="GO" id="GO:0000049">
    <property type="term" value="F:tRNA binding"/>
    <property type="evidence" value="ECO:0007669"/>
    <property type="project" value="UniProtKB-UniRule"/>
</dbReference>
<dbReference type="GO" id="GO:0042245">
    <property type="term" value="P:RNA repair"/>
    <property type="evidence" value="ECO:0007669"/>
    <property type="project" value="UniProtKB-KW"/>
</dbReference>
<dbReference type="GO" id="GO:0001680">
    <property type="term" value="P:tRNA 3'-terminal CCA addition"/>
    <property type="evidence" value="ECO:0007669"/>
    <property type="project" value="UniProtKB-UniRule"/>
</dbReference>
<dbReference type="CDD" id="cd05400">
    <property type="entry name" value="NT_2-5OAS_ClassI-CCAase"/>
    <property type="match status" value="1"/>
</dbReference>
<dbReference type="Gene3D" id="3.30.70.1550">
    <property type="entry name" value="Archaeal tRNA CCA-adding enzyme catalytic domain"/>
    <property type="match status" value="1"/>
</dbReference>
<dbReference type="Gene3D" id="3.30.460.10">
    <property type="entry name" value="Beta Polymerase, domain 2"/>
    <property type="match status" value="1"/>
</dbReference>
<dbReference type="Gene3D" id="1.10.1410.30">
    <property type="entry name" value="CCA tRNA nucleotidyltransferase, domain 2"/>
    <property type="match status" value="1"/>
</dbReference>
<dbReference type="Gene3D" id="3.30.70.590">
    <property type="entry name" value="Poly(A) polymerase predicted RNA binding domain"/>
    <property type="match status" value="1"/>
</dbReference>
<dbReference type="HAMAP" id="MF_01264">
    <property type="entry name" value="CCA_arch"/>
    <property type="match status" value="1"/>
</dbReference>
<dbReference type="InterPro" id="IPR048833">
    <property type="entry name" value="CAA_C"/>
</dbReference>
<dbReference type="InterPro" id="IPR008229">
    <property type="entry name" value="CCA-adding_arc"/>
</dbReference>
<dbReference type="InterPro" id="IPR042090">
    <property type="entry name" value="CCA_tRNA_nucleotrans_2"/>
</dbReference>
<dbReference type="InterPro" id="IPR006116">
    <property type="entry name" value="NT_2-5OAS_ClassI-CCAase"/>
</dbReference>
<dbReference type="InterPro" id="IPR043519">
    <property type="entry name" value="NT_sf"/>
</dbReference>
<dbReference type="InterPro" id="IPR011068">
    <property type="entry name" value="NuclTrfase_I-like_C"/>
</dbReference>
<dbReference type="InterPro" id="IPR002934">
    <property type="entry name" value="Polymerase_NTP_transf_dom"/>
</dbReference>
<dbReference type="InterPro" id="IPR015329">
    <property type="entry name" value="tRNA_NucTransf2"/>
</dbReference>
<dbReference type="NCBIfam" id="TIGR03671">
    <property type="entry name" value="cca_archaeal"/>
    <property type="match status" value="1"/>
</dbReference>
<dbReference type="PANTHER" id="PTHR39643">
    <property type="entry name" value="CCA-ADDING ENZYME"/>
    <property type="match status" value="1"/>
</dbReference>
<dbReference type="PANTHER" id="PTHR39643:SF1">
    <property type="entry name" value="CCA-ADDING ENZYME"/>
    <property type="match status" value="1"/>
</dbReference>
<dbReference type="Pfam" id="PF21133">
    <property type="entry name" value="CAA_C"/>
    <property type="match status" value="1"/>
</dbReference>
<dbReference type="Pfam" id="PF01909">
    <property type="entry name" value="NTP_transf_2"/>
    <property type="match status" value="1"/>
</dbReference>
<dbReference type="Pfam" id="PF09249">
    <property type="entry name" value="tRNA_NucTransf2"/>
    <property type="match status" value="1"/>
</dbReference>
<dbReference type="PIRSF" id="PIRSF005335">
    <property type="entry name" value="CCA_arch"/>
    <property type="match status" value="1"/>
</dbReference>
<dbReference type="SUPFAM" id="SSF81301">
    <property type="entry name" value="Nucleotidyltransferase"/>
    <property type="match status" value="1"/>
</dbReference>
<dbReference type="SUPFAM" id="SSF55003">
    <property type="entry name" value="PAP/Archaeal CCA-adding enzyme, C-terminal domain"/>
    <property type="match status" value="1"/>
</dbReference>
<dbReference type="SUPFAM" id="SSF81631">
    <property type="entry name" value="PAP/OAS1 substrate-binding domain"/>
    <property type="match status" value="1"/>
</dbReference>
<evidence type="ECO:0000255" key="1">
    <source>
        <dbReference type="HAMAP-Rule" id="MF_01264"/>
    </source>
</evidence>
<gene>
    <name evidence="1" type="primary">cca</name>
    <name type="ordered locus">MA_3559</name>
</gene>
<comment type="function">
    <text evidence="1">Catalyzes the addition and repair of the essential 3'-terminal CCA sequence in tRNAs without using a nucleic acid template. Adds these three nucleotides in the order of C, C, and A to the tRNA nucleotide-73, using CTP and ATP as substrates and producing inorganic pyrophosphate. tRNA 3'-terminal CCA addition is required both for tRNA processing and repair. Also involved in tRNA surveillance by mediating tandem CCA addition to generate a CCACCA at the 3' terminus of unstable tRNAs. While stable tRNAs receive only 3'-terminal CCA, unstable tRNAs are marked with CCACCA and rapidly degraded.</text>
</comment>
<comment type="catalytic activity">
    <reaction evidence="1">
        <text>a tRNA precursor + 2 CTP + ATP = a tRNA with a 3' CCA end + 3 diphosphate</text>
        <dbReference type="Rhea" id="RHEA:14433"/>
        <dbReference type="Rhea" id="RHEA-COMP:10465"/>
        <dbReference type="Rhea" id="RHEA-COMP:10468"/>
        <dbReference type="ChEBI" id="CHEBI:30616"/>
        <dbReference type="ChEBI" id="CHEBI:33019"/>
        <dbReference type="ChEBI" id="CHEBI:37563"/>
        <dbReference type="ChEBI" id="CHEBI:74896"/>
        <dbReference type="ChEBI" id="CHEBI:83071"/>
        <dbReference type="EC" id="2.7.7.72"/>
    </reaction>
</comment>
<comment type="catalytic activity">
    <reaction evidence="1">
        <text>a tRNA with a 3' CCA end + 2 CTP + ATP = a tRNA with a 3' CCACCA end + 3 diphosphate</text>
        <dbReference type="Rhea" id="RHEA:76235"/>
        <dbReference type="Rhea" id="RHEA-COMP:10468"/>
        <dbReference type="Rhea" id="RHEA-COMP:18655"/>
        <dbReference type="ChEBI" id="CHEBI:30616"/>
        <dbReference type="ChEBI" id="CHEBI:33019"/>
        <dbReference type="ChEBI" id="CHEBI:37563"/>
        <dbReference type="ChEBI" id="CHEBI:83071"/>
        <dbReference type="ChEBI" id="CHEBI:195187"/>
    </reaction>
    <physiologicalReaction direction="left-to-right" evidence="1">
        <dbReference type="Rhea" id="RHEA:76236"/>
    </physiologicalReaction>
</comment>
<comment type="cofactor">
    <cofactor evidence="1">
        <name>Mg(2+)</name>
        <dbReference type="ChEBI" id="CHEBI:18420"/>
    </cofactor>
</comment>
<comment type="subunit">
    <text evidence="1">Homodimer.</text>
</comment>
<comment type="miscellaneous">
    <text evidence="1">A single active site specifically recognizes both ATP and CTP and is responsible for their addition.</text>
</comment>
<comment type="similarity">
    <text evidence="1">Belongs to the tRNA nucleotidyltransferase/poly(A) polymerase family. Archaeal CCA-adding enzyme subfamily.</text>
</comment>
<sequence>MEKDTSIPEDLKLAVLEKIKPTEAERKILTAVQEELAAEVKAAAEKLCVADIFVKMVGSAARGTWLSGTHDIDVFISFPEETSREELERRGMEIAREVAKKAEHAEDRHAEHPYLNIVFKGFDVDLVPCFRVESACQLKSAVDRTPFHNEFVKTHIKGREDDVLLMKQFMRGGGVYGSELKTQGFSGYLTELLIIHYGSFENTVKAACLWKPGKKIDIMQHSEMEHTEPLVMVDPTDPKRNVAAALSLDKFCMFMDHCREFMKSPGLNFFFPPPLSPLEDREFLEKLESRKSSQLAIVFKTPDIVDDVLYPQLYKMEQAAAALLHEYDFSVIKTGVWSGKPETVVMLELISGTLPNVKKRIGPPVWVREHAEKFKAKYEGAENVFGGYIEGGKYVFEIQRKYPTAKGLLENQLLNCSLGKQVKSSVSAGFEVIEDAEICRLKDPDFRVFLRKWV</sequence>
<reference key="1">
    <citation type="journal article" date="2002" name="Genome Res.">
        <title>The genome of Methanosarcina acetivorans reveals extensive metabolic and physiological diversity.</title>
        <authorList>
            <person name="Galagan J.E."/>
            <person name="Nusbaum C."/>
            <person name="Roy A."/>
            <person name="Endrizzi M.G."/>
            <person name="Macdonald P."/>
            <person name="FitzHugh W."/>
            <person name="Calvo S."/>
            <person name="Engels R."/>
            <person name="Smirnov S."/>
            <person name="Atnoor D."/>
            <person name="Brown A."/>
            <person name="Allen N."/>
            <person name="Naylor J."/>
            <person name="Stange-Thomann N."/>
            <person name="DeArellano K."/>
            <person name="Johnson R."/>
            <person name="Linton L."/>
            <person name="McEwan P."/>
            <person name="McKernan K."/>
            <person name="Talamas J."/>
            <person name="Tirrell A."/>
            <person name="Ye W."/>
            <person name="Zimmer A."/>
            <person name="Barber R.D."/>
            <person name="Cann I."/>
            <person name="Graham D.E."/>
            <person name="Grahame D.A."/>
            <person name="Guss A.M."/>
            <person name="Hedderich R."/>
            <person name="Ingram-Smith C."/>
            <person name="Kuettner H.C."/>
            <person name="Krzycki J.A."/>
            <person name="Leigh J.A."/>
            <person name="Li W."/>
            <person name="Liu J."/>
            <person name="Mukhopadhyay B."/>
            <person name="Reeve J.N."/>
            <person name="Smith K."/>
            <person name="Springer T.A."/>
            <person name="Umayam L.A."/>
            <person name="White O."/>
            <person name="White R.H."/>
            <person name="de Macario E.C."/>
            <person name="Ferry J.G."/>
            <person name="Jarrell K.F."/>
            <person name="Jing H."/>
            <person name="Macario A.J.L."/>
            <person name="Paulsen I.T."/>
            <person name="Pritchett M."/>
            <person name="Sowers K.R."/>
            <person name="Swanson R.V."/>
            <person name="Zinder S.H."/>
            <person name="Lander E."/>
            <person name="Metcalf W.W."/>
            <person name="Birren B."/>
        </authorList>
    </citation>
    <scope>NUCLEOTIDE SEQUENCE [LARGE SCALE GENOMIC DNA]</scope>
    <source>
        <strain>ATCC 35395 / DSM 2834 / JCM 12185 / C2A</strain>
    </source>
</reference>
<name>CCA_METAC</name>